<name>SYV_STAA3</name>
<reference key="1">
    <citation type="journal article" date="2006" name="Lancet">
        <title>Complete genome sequence of USA300, an epidemic clone of community-acquired meticillin-resistant Staphylococcus aureus.</title>
        <authorList>
            <person name="Diep B.A."/>
            <person name="Gill S.R."/>
            <person name="Chang R.F."/>
            <person name="Phan T.H."/>
            <person name="Chen J.H."/>
            <person name="Davidson M.G."/>
            <person name="Lin F."/>
            <person name="Lin J."/>
            <person name="Carleton H.A."/>
            <person name="Mongodin E.F."/>
            <person name="Sensabaugh G.F."/>
            <person name="Perdreau-Remington F."/>
        </authorList>
    </citation>
    <scope>NUCLEOTIDE SEQUENCE [LARGE SCALE GENOMIC DNA]</scope>
    <source>
        <strain>USA300</strain>
    </source>
</reference>
<feature type="chain" id="PRO_1000022177" description="Valine--tRNA ligase">
    <location>
        <begin position="1"/>
        <end position="876"/>
    </location>
</feature>
<feature type="coiled-coil region" evidence="1">
    <location>
        <begin position="805"/>
        <end position="876"/>
    </location>
</feature>
<feature type="short sequence motif" description="'HIGH' region">
    <location>
        <begin position="44"/>
        <end position="54"/>
    </location>
</feature>
<feature type="short sequence motif" description="'KMSKS' region">
    <location>
        <begin position="520"/>
        <end position="524"/>
    </location>
</feature>
<feature type="binding site" evidence="1">
    <location>
        <position position="523"/>
    </location>
    <ligand>
        <name>ATP</name>
        <dbReference type="ChEBI" id="CHEBI:30616"/>
    </ligand>
</feature>
<comment type="function">
    <text evidence="1">Catalyzes the attachment of valine to tRNA(Val). As ValRS can inadvertently accommodate and process structurally similar amino acids such as threonine, to avoid such errors, it has a 'posttransfer' editing activity that hydrolyzes mischarged Thr-tRNA(Val) in a tRNA-dependent manner.</text>
</comment>
<comment type="catalytic activity">
    <reaction evidence="1">
        <text>tRNA(Val) + L-valine + ATP = L-valyl-tRNA(Val) + AMP + diphosphate</text>
        <dbReference type="Rhea" id="RHEA:10704"/>
        <dbReference type="Rhea" id="RHEA-COMP:9672"/>
        <dbReference type="Rhea" id="RHEA-COMP:9708"/>
        <dbReference type="ChEBI" id="CHEBI:30616"/>
        <dbReference type="ChEBI" id="CHEBI:33019"/>
        <dbReference type="ChEBI" id="CHEBI:57762"/>
        <dbReference type="ChEBI" id="CHEBI:78442"/>
        <dbReference type="ChEBI" id="CHEBI:78537"/>
        <dbReference type="ChEBI" id="CHEBI:456215"/>
        <dbReference type="EC" id="6.1.1.9"/>
    </reaction>
</comment>
<comment type="subunit">
    <text evidence="1">Monomer.</text>
</comment>
<comment type="subcellular location">
    <subcellularLocation>
        <location evidence="1">Cytoplasm</location>
    </subcellularLocation>
</comment>
<comment type="domain">
    <text evidence="1">ValRS has two distinct active sites: one for aminoacylation and one for editing. The misactivated threonine is translocated from the active site to the editing site.</text>
</comment>
<comment type="domain">
    <text evidence="1">The C-terminal coiled-coil domain is crucial for aminoacylation activity.</text>
</comment>
<comment type="similarity">
    <text evidence="1">Belongs to the class-I aminoacyl-tRNA synthetase family. ValS type 1 subfamily.</text>
</comment>
<sequence>MEMKPKYDPREVEAGRYEEWVKNGYFKPSEDKSKETYTIVIPPPNVTGKLHLGHAWDTTLQDIITRMKRMQGYDTLYLPGMDHAGIATQAKVEAKLNEQGITRYDLGREKFLEQAWDWKEEYASFIRAQWAKLGLGLDYSRERFTLDEGLSKAVKKVFVDLYNKGIIYRGERIINWDPKARTALSDIEVIHEDVQGAFYHFKYPYADGEGFIEIATTRPETMLGDTAIVVNPNDERYKDVIGKTVILPIVGRELPILADEYVDIDFGSGAMKVTPAHDPNDFEIGQRHQLENIIVMDENGKMNDKAGKYEGMDRFDCRKQLVKDLKEQDLVIKIEDHVHSVGHSERSGAVVEPYLSTQWFVRMEDLAKRSLDNQKTDDRIDFYPQRFEHTFNQWMENIRDWTISRQLWWGHQIPAWYHKETGEIYVGEEAPTDIENWQQDEDVLDTWFSSALWPFSTLGWPDLESEDFKRYYPTNALVTGYDIIFFWVARMIFQGLEFTDRRPFNDVLLHGLVRAEDGRKMSKSLGNGVDPMDVIDEYGADSLRYFLATGSSPGHDLRYSTEKVESVWNFINKIWNGARFSLMNIGEDFKVEDIDLSGNLSLADKWILTRLNETIATVTDLSDKYEFGEVGRALYNFIWDDFCDWYIEMSKIPMNSNDEEQKQVTRSVLSYTLDNIMRMLHPFMPFVTEKIWQSLPHEGDTIVKASWPEVRESLIFEESKQTMQQLVEIIKSVRQSRVEVNTPLSKEIPILIQAKDKEIETTLSQNKDYLIKFCNPSTLNISTDVEIPEKAMTSVVIAGKVVLPLEGLIDMDKEISRLEKELAKLQSELDRVDKKLSNENFVSKAPEKVINEEKRKKQDYQEKYDGVKARIEQLKA</sequence>
<protein>
    <recommendedName>
        <fullName evidence="1">Valine--tRNA ligase</fullName>
        <ecNumber evidence="1">6.1.1.9</ecNumber>
    </recommendedName>
    <alternativeName>
        <fullName evidence="1">Valyl-tRNA synthetase</fullName>
        <shortName evidence="1">ValRS</shortName>
    </alternativeName>
</protein>
<evidence type="ECO:0000255" key="1">
    <source>
        <dbReference type="HAMAP-Rule" id="MF_02004"/>
    </source>
</evidence>
<gene>
    <name evidence="1" type="primary">valS</name>
    <name type="ordered locus">SAUSA300_1611</name>
</gene>
<proteinExistence type="inferred from homology"/>
<organism>
    <name type="scientific">Staphylococcus aureus (strain USA300)</name>
    <dbReference type="NCBI Taxonomy" id="367830"/>
    <lineage>
        <taxon>Bacteria</taxon>
        <taxon>Bacillati</taxon>
        <taxon>Bacillota</taxon>
        <taxon>Bacilli</taxon>
        <taxon>Bacillales</taxon>
        <taxon>Staphylococcaceae</taxon>
        <taxon>Staphylococcus</taxon>
    </lineage>
</organism>
<accession>Q2FG72</accession>
<dbReference type="EC" id="6.1.1.9" evidence="1"/>
<dbReference type="EMBL" id="CP000255">
    <property type="protein sequence ID" value="ABD21250.1"/>
    <property type="molecule type" value="Genomic_DNA"/>
</dbReference>
<dbReference type="RefSeq" id="WP_000425353.1">
    <property type="nucleotide sequence ID" value="NZ_CP027476.1"/>
</dbReference>
<dbReference type="SMR" id="Q2FG72"/>
<dbReference type="KEGG" id="saa:SAUSA300_1611"/>
<dbReference type="HOGENOM" id="CLU_001493_0_2_9"/>
<dbReference type="OMA" id="LDTWMDS"/>
<dbReference type="Proteomes" id="UP000001939">
    <property type="component" value="Chromosome"/>
</dbReference>
<dbReference type="GO" id="GO:0005829">
    <property type="term" value="C:cytosol"/>
    <property type="evidence" value="ECO:0007669"/>
    <property type="project" value="TreeGrafter"/>
</dbReference>
<dbReference type="GO" id="GO:0002161">
    <property type="term" value="F:aminoacyl-tRNA deacylase activity"/>
    <property type="evidence" value="ECO:0007669"/>
    <property type="project" value="InterPro"/>
</dbReference>
<dbReference type="GO" id="GO:0005524">
    <property type="term" value="F:ATP binding"/>
    <property type="evidence" value="ECO:0007669"/>
    <property type="project" value="UniProtKB-UniRule"/>
</dbReference>
<dbReference type="GO" id="GO:0004832">
    <property type="term" value="F:valine-tRNA ligase activity"/>
    <property type="evidence" value="ECO:0007669"/>
    <property type="project" value="UniProtKB-UniRule"/>
</dbReference>
<dbReference type="GO" id="GO:0006438">
    <property type="term" value="P:valyl-tRNA aminoacylation"/>
    <property type="evidence" value="ECO:0007669"/>
    <property type="project" value="UniProtKB-UniRule"/>
</dbReference>
<dbReference type="CDD" id="cd07962">
    <property type="entry name" value="Anticodon_Ia_Val"/>
    <property type="match status" value="1"/>
</dbReference>
<dbReference type="CDD" id="cd00817">
    <property type="entry name" value="ValRS_core"/>
    <property type="match status" value="1"/>
</dbReference>
<dbReference type="FunFam" id="1.10.287.380:FF:000001">
    <property type="entry name" value="Valine--tRNA ligase"/>
    <property type="match status" value="1"/>
</dbReference>
<dbReference type="FunFam" id="1.10.730.10:FF:000014">
    <property type="entry name" value="Valine--tRNA ligase"/>
    <property type="match status" value="1"/>
</dbReference>
<dbReference type="FunFam" id="3.40.50.620:FF:000032">
    <property type="entry name" value="Valine--tRNA ligase"/>
    <property type="match status" value="1"/>
</dbReference>
<dbReference type="FunFam" id="3.40.50.620:FF:000098">
    <property type="entry name" value="Valine--tRNA ligase"/>
    <property type="match status" value="1"/>
</dbReference>
<dbReference type="FunFam" id="3.90.740.10:FF:000005">
    <property type="entry name" value="Valine--tRNA ligase, mitochondrial"/>
    <property type="match status" value="1"/>
</dbReference>
<dbReference type="Gene3D" id="3.40.50.620">
    <property type="entry name" value="HUPs"/>
    <property type="match status" value="2"/>
</dbReference>
<dbReference type="Gene3D" id="1.10.730.10">
    <property type="entry name" value="Isoleucyl-tRNA Synthetase, Domain 1"/>
    <property type="match status" value="1"/>
</dbReference>
<dbReference type="Gene3D" id="1.10.287.380">
    <property type="entry name" value="Valyl-tRNA synthetase, C-terminal domain"/>
    <property type="match status" value="1"/>
</dbReference>
<dbReference type="Gene3D" id="3.90.740.10">
    <property type="entry name" value="Valyl/Leucyl/Isoleucyl-tRNA synthetase, editing domain"/>
    <property type="match status" value="1"/>
</dbReference>
<dbReference type="HAMAP" id="MF_02004">
    <property type="entry name" value="Val_tRNA_synth_type1"/>
    <property type="match status" value="1"/>
</dbReference>
<dbReference type="InterPro" id="IPR001412">
    <property type="entry name" value="aa-tRNA-synth_I_CS"/>
</dbReference>
<dbReference type="InterPro" id="IPR002300">
    <property type="entry name" value="aa-tRNA-synth_Ia"/>
</dbReference>
<dbReference type="InterPro" id="IPR033705">
    <property type="entry name" value="Anticodon_Ia_Val"/>
</dbReference>
<dbReference type="InterPro" id="IPR013155">
    <property type="entry name" value="M/V/L/I-tRNA-synth_anticd-bd"/>
</dbReference>
<dbReference type="InterPro" id="IPR014729">
    <property type="entry name" value="Rossmann-like_a/b/a_fold"/>
</dbReference>
<dbReference type="InterPro" id="IPR010978">
    <property type="entry name" value="tRNA-bd_arm"/>
</dbReference>
<dbReference type="InterPro" id="IPR009080">
    <property type="entry name" value="tRNAsynth_Ia_anticodon-bd"/>
</dbReference>
<dbReference type="InterPro" id="IPR037118">
    <property type="entry name" value="Val-tRNA_synth_C_sf"/>
</dbReference>
<dbReference type="InterPro" id="IPR019499">
    <property type="entry name" value="Val-tRNA_synth_tRNA-bd"/>
</dbReference>
<dbReference type="InterPro" id="IPR009008">
    <property type="entry name" value="Val/Leu/Ile-tRNA-synth_edit"/>
</dbReference>
<dbReference type="InterPro" id="IPR002303">
    <property type="entry name" value="Valyl-tRNA_ligase"/>
</dbReference>
<dbReference type="NCBIfam" id="NF004349">
    <property type="entry name" value="PRK05729.1"/>
    <property type="match status" value="1"/>
</dbReference>
<dbReference type="NCBIfam" id="TIGR00422">
    <property type="entry name" value="valS"/>
    <property type="match status" value="1"/>
</dbReference>
<dbReference type="PANTHER" id="PTHR11946:SF93">
    <property type="entry name" value="VALINE--TRNA LIGASE, CHLOROPLASTIC_MITOCHONDRIAL 2"/>
    <property type="match status" value="1"/>
</dbReference>
<dbReference type="PANTHER" id="PTHR11946">
    <property type="entry name" value="VALYL-TRNA SYNTHETASES"/>
    <property type="match status" value="1"/>
</dbReference>
<dbReference type="Pfam" id="PF08264">
    <property type="entry name" value="Anticodon_1"/>
    <property type="match status" value="1"/>
</dbReference>
<dbReference type="Pfam" id="PF00133">
    <property type="entry name" value="tRNA-synt_1"/>
    <property type="match status" value="1"/>
</dbReference>
<dbReference type="Pfam" id="PF10458">
    <property type="entry name" value="Val_tRNA-synt_C"/>
    <property type="match status" value="1"/>
</dbReference>
<dbReference type="PRINTS" id="PR00986">
    <property type="entry name" value="TRNASYNTHVAL"/>
</dbReference>
<dbReference type="SUPFAM" id="SSF47323">
    <property type="entry name" value="Anticodon-binding domain of a subclass of class I aminoacyl-tRNA synthetases"/>
    <property type="match status" value="1"/>
</dbReference>
<dbReference type="SUPFAM" id="SSF52374">
    <property type="entry name" value="Nucleotidylyl transferase"/>
    <property type="match status" value="1"/>
</dbReference>
<dbReference type="SUPFAM" id="SSF46589">
    <property type="entry name" value="tRNA-binding arm"/>
    <property type="match status" value="1"/>
</dbReference>
<dbReference type="SUPFAM" id="SSF50677">
    <property type="entry name" value="ValRS/IleRS/LeuRS editing domain"/>
    <property type="match status" value="1"/>
</dbReference>
<dbReference type="PROSITE" id="PS00178">
    <property type="entry name" value="AA_TRNA_LIGASE_I"/>
    <property type="match status" value="1"/>
</dbReference>
<keyword id="KW-0030">Aminoacyl-tRNA synthetase</keyword>
<keyword id="KW-0067">ATP-binding</keyword>
<keyword id="KW-0175">Coiled coil</keyword>
<keyword id="KW-0963">Cytoplasm</keyword>
<keyword id="KW-0436">Ligase</keyword>
<keyword id="KW-0547">Nucleotide-binding</keyword>
<keyword id="KW-0648">Protein biosynthesis</keyword>